<accession>P0ACC4</accession>
<accession>P37026</accession>
<feature type="chain" id="PRO_0000076992" description="Iron-sulfur cluster insertion protein ErpA">
    <location>
        <begin position="1"/>
        <end position="114"/>
    </location>
</feature>
<feature type="binding site" evidence="1">
    <location>
        <position position="42"/>
    </location>
    <ligand>
        <name>iron-sulfur cluster</name>
        <dbReference type="ChEBI" id="CHEBI:30408"/>
    </ligand>
</feature>
<feature type="binding site" evidence="1">
    <location>
        <position position="106"/>
    </location>
    <ligand>
        <name>iron-sulfur cluster</name>
        <dbReference type="ChEBI" id="CHEBI:30408"/>
    </ligand>
</feature>
<feature type="binding site" evidence="1">
    <location>
        <position position="108"/>
    </location>
    <ligand>
        <name>iron-sulfur cluster</name>
        <dbReference type="ChEBI" id="CHEBI:30408"/>
    </ligand>
</feature>
<reference key="1">
    <citation type="journal article" date="2002" name="Proc. Natl. Acad. Sci. U.S.A.">
        <title>Extensive mosaic structure revealed by the complete genome sequence of uropathogenic Escherichia coli.</title>
        <authorList>
            <person name="Welch R.A."/>
            <person name="Burland V."/>
            <person name="Plunkett G. III"/>
            <person name="Redford P."/>
            <person name="Roesch P."/>
            <person name="Rasko D."/>
            <person name="Buckles E.L."/>
            <person name="Liou S.-R."/>
            <person name="Boutin A."/>
            <person name="Hackett J."/>
            <person name="Stroud D."/>
            <person name="Mayhew G.F."/>
            <person name="Rose D.J."/>
            <person name="Zhou S."/>
            <person name="Schwartz D.C."/>
            <person name="Perna N.T."/>
            <person name="Mobley H.L.T."/>
            <person name="Donnenberg M.S."/>
            <person name="Blattner F.R."/>
        </authorList>
    </citation>
    <scope>NUCLEOTIDE SEQUENCE [LARGE SCALE GENOMIC DNA]</scope>
    <source>
        <strain>CFT073 / ATCC 700928 / UPEC</strain>
    </source>
</reference>
<gene>
    <name evidence="1" type="primary">erpA</name>
    <name type="ordered locus">c0191</name>
</gene>
<protein>
    <recommendedName>
        <fullName evidence="1">Iron-sulfur cluster insertion protein ErpA</fullName>
    </recommendedName>
</protein>
<keyword id="KW-0408">Iron</keyword>
<keyword id="KW-0411">Iron-sulfur</keyword>
<keyword id="KW-0479">Metal-binding</keyword>
<keyword id="KW-1185">Reference proteome</keyword>
<proteinExistence type="inferred from homology"/>
<comment type="function">
    <text evidence="1">Required for insertion of 4Fe-4S clusters for at least IspG.</text>
</comment>
<comment type="cofactor">
    <cofactor evidence="1">
        <name>iron-sulfur cluster</name>
        <dbReference type="ChEBI" id="CHEBI:30408"/>
    </cofactor>
    <text evidence="1">Binds 1 iron-sulfur cluster per subunit.</text>
</comment>
<comment type="subunit">
    <text evidence="1">Homodimer.</text>
</comment>
<comment type="similarity">
    <text evidence="1">Belongs to the HesB/IscA family.</text>
</comment>
<comment type="sequence caution" evidence="2">
    <conflict type="erroneous initiation">
        <sequence resource="EMBL-CDS" id="AAN78685"/>
    </conflict>
</comment>
<organism>
    <name type="scientific">Escherichia coli O6:H1 (strain CFT073 / ATCC 700928 / UPEC)</name>
    <dbReference type="NCBI Taxonomy" id="199310"/>
    <lineage>
        <taxon>Bacteria</taxon>
        <taxon>Pseudomonadati</taxon>
        <taxon>Pseudomonadota</taxon>
        <taxon>Gammaproteobacteria</taxon>
        <taxon>Enterobacterales</taxon>
        <taxon>Enterobacteriaceae</taxon>
        <taxon>Escherichia</taxon>
    </lineage>
</organism>
<dbReference type="EMBL" id="AE014075">
    <property type="protein sequence ID" value="AAN78685.1"/>
    <property type="status" value="ALT_INIT"/>
    <property type="molecule type" value="Genomic_DNA"/>
</dbReference>
<dbReference type="RefSeq" id="WP_001295564.1">
    <property type="nucleotide sequence ID" value="NZ_CP051263.1"/>
</dbReference>
<dbReference type="SMR" id="P0ACC4"/>
<dbReference type="STRING" id="199310.c0191"/>
<dbReference type="GeneID" id="93777270"/>
<dbReference type="KEGG" id="ecc:c0191"/>
<dbReference type="eggNOG" id="COG0316">
    <property type="taxonomic scope" value="Bacteria"/>
</dbReference>
<dbReference type="HOGENOM" id="CLU_069054_5_3_6"/>
<dbReference type="Proteomes" id="UP000001410">
    <property type="component" value="Chromosome"/>
</dbReference>
<dbReference type="GO" id="GO:0005829">
    <property type="term" value="C:cytosol"/>
    <property type="evidence" value="ECO:0007669"/>
    <property type="project" value="TreeGrafter"/>
</dbReference>
<dbReference type="GO" id="GO:0051537">
    <property type="term" value="F:2 iron, 2 sulfur cluster binding"/>
    <property type="evidence" value="ECO:0007669"/>
    <property type="project" value="TreeGrafter"/>
</dbReference>
<dbReference type="GO" id="GO:0051539">
    <property type="term" value="F:4 iron, 4 sulfur cluster binding"/>
    <property type="evidence" value="ECO:0007669"/>
    <property type="project" value="TreeGrafter"/>
</dbReference>
<dbReference type="GO" id="GO:0005506">
    <property type="term" value="F:iron ion binding"/>
    <property type="evidence" value="ECO:0007669"/>
    <property type="project" value="UniProtKB-UniRule"/>
</dbReference>
<dbReference type="GO" id="GO:0016226">
    <property type="term" value="P:iron-sulfur cluster assembly"/>
    <property type="evidence" value="ECO:0007669"/>
    <property type="project" value="UniProtKB-UniRule"/>
</dbReference>
<dbReference type="FunFam" id="2.60.300.12:FF:000002">
    <property type="entry name" value="Iron-sulfur cluster insertion protein ErpA"/>
    <property type="match status" value="1"/>
</dbReference>
<dbReference type="Gene3D" id="2.60.300.12">
    <property type="entry name" value="HesB-like domain"/>
    <property type="match status" value="1"/>
</dbReference>
<dbReference type="HAMAP" id="MF_01380">
    <property type="entry name" value="Fe_S_insert_ErpA"/>
    <property type="match status" value="1"/>
</dbReference>
<dbReference type="InterPro" id="IPR000361">
    <property type="entry name" value="FeS_biogenesis"/>
</dbReference>
<dbReference type="InterPro" id="IPR016092">
    <property type="entry name" value="FeS_cluster_insertion"/>
</dbReference>
<dbReference type="InterPro" id="IPR017870">
    <property type="entry name" value="FeS_cluster_insertion_CS"/>
</dbReference>
<dbReference type="InterPro" id="IPR023063">
    <property type="entry name" value="FeS_cluster_insertion_RrpA"/>
</dbReference>
<dbReference type="InterPro" id="IPR035903">
    <property type="entry name" value="HesB-like_dom_sf"/>
</dbReference>
<dbReference type="NCBIfam" id="TIGR00049">
    <property type="entry name" value="iron-sulfur cluster assembly accessory protein"/>
    <property type="match status" value="1"/>
</dbReference>
<dbReference type="NCBIfam" id="NF010147">
    <property type="entry name" value="PRK13623.1"/>
    <property type="match status" value="1"/>
</dbReference>
<dbReference type="PANTHER" id="PTHR43011">
    <property type="entry name" value="IRON-SULFUR CLUSTER ASSEMBLY 2 HOMOLOG, MITOCHONDRIAL"/>
    <property type="match status" value="1"/>
</dbReference>
<dbReference type="PANTHER" id="PTHR43011:SF1">
    <property type="entry name" value="IRON-SULFUR CLUSTER ASSEMBLY 2 HOMOLOG, MITOCHONDRIAL"/>
    <property type="match status" value="1"/>
</dbReference>
<dbReference type="Pfam" id="PF01521">
    <property type="entry name" value="Fe-S_biosyn"/>
    <property type="match status" value="1"/>
</dbReference>
<dbReference type="SUPFAM" id="SSF89360">
    <property type="entry name" value="HesB-like domain"/>
    <property type="match status" value="1"/>
</dbReference>
<dbReference type="PROSITE" id="PS01152">
    <property type="entry name" value="HESB"/>
    <property type="match status" value="1"/>
</dbReference>
<evidence type="ECO:0000255" key="1">
    <source>
        <dbReference type="HAMAP-Rule" id="MF_01380"/>
    </source>
</evidence>
<evidence type="ECO:0000305" key="2"/>
<name>ERPA_ECOL6</name>
<sequence length="114" mass="12100">MSDDVALPLEFTDAAANKVKSLIADEDNPNLKLRVYITGGGCSGFQYGFTFDDQVNEGDMTIEKQGVGLVVDPMSLQYLVGGSVDYTEGLEGSRFIVTNPNAKSTCGCGSSFSI</sequence>